<comment type="function">
    <text evidence="6">Satiety factor closely associated with the actions of leptin and neuropeptide Y; this anorectic peptide inhibits both normal and starvation-induced feeding and completely blocks the feeding response induced by neuropeptide Y and regulated by leptin in the hypothalamus. It promotes neuronal development and survival in vitro.</text>
</comment>
<comment type="interaction">
    <interactant intactId="EBI-4314526">
        <id>Q16568</id>
    </interactant>
    <interactant intactId="EBI-4314481">
        <id>P13688</id>
        <label>CEACAM1</label>
    </interactant>
    <organismsDiffer>false</organismsDiffer>
    <experiments>3</experiments>
</comment>
<comment type="interaction">
    <interactant intactId="EBI-4314526">
        <id>Q16568</id>
    </interactant>
    <interactant intactId="EBI-4314501">
        <id>P40199</id>
        <label>CEACAM6</label>
    </interactant>
    <organismsDiffer>false</organismsDiffer>
    <experiments>3</experiments>
</comment>
<comment type="interaction">
    <interactant intactId="EBI-4314526">
        <id>Q16568</id>
    </interactant>
    <interactant intactId="EBI-8025850">
        <id>O14770-4</id>
        <label>MEIS2</label>
    </interactant>
    <organismsDiffer>false</organismsDiffer>
    <experiments>3</experiments>
</comment>
<comment type="subcellular location">
    <subcellularLocation>
        <location evidence="7">Secreted</location>
    </subcellularLocation>
</comment>
<comment type="tissue specificity">
    <text>Hypothalamus. Found in neurons of the ventrolateral part of the arcuate nucleus, in the external zone of the median eminence, and also found in terminals in the periventricular part of the paraventricular nucleus.</text>
</comment>
<comment type="induction">
    <text>By leptin.</text>
</comment>
<comment type="similarity">
    <text evidence="7">Belongs to the CART family.</text>
</comment>
<organism>
    <name type="scientific">Homo sapiens</name>
    <name type="common">Human</name>
    <dbReference type="NCBI Taxonomy" id="9606"/>
    <lineage>
        <taxon>Eukaryota</taxon>
        <taxon>Metazoa</taxon>
        <taxon>Chordata</taxon>
        <taxon>Craniata</taxon>
        <taxon>Vertebrata</taxon>
        <taxon>Euteleostomi</taxon>
        <taxon>Mammalia</taxon>
        <taxon>Eutheria</taxon>
        <taxon>Euarchontoglires</taxon>
        <taxon>Primates</taxon>
        <taxon>Haplorrhini</taxon>
        <taxon>Catarrhini</taxon>
        <taxon>Hominidae</taxon>
        <taxon>Homo</taxon>
    </lineage>
</organism>
<evidence type="ECO:0000250" key="1">
    <source>
        <dbReference type="UniProtKB" id="P49192"/>
    </source>
</evidence>
<evidence type="ECO:0000250" key="2">
    <source>
        <dbReference type="UniProtKB" id="P56388"/>
    </source>
</evidence>
<evidence type="ECO:0000269" key="3">
    <source>
    </source>
</evidence>
<evidence type="ECO:0000269" key="4">
    <source>
    </source>
</evidence>
<evidence type="ECO:0000269" key="5">
    <source>
    </source>
</evidence>
<evidence type="ECO:0000269" key="6">
    <source>
    </source>
</evidence>
<evidence type="ECO:0000305" key="7"/>
<evidence type="ECO:0007744" key="8">
    <source>
        <dbReference type="PDB" id="1HY9"/>
    </source>
</evidence>
<evidence type="ECO:0007829" key="9">
    <source>
        <dbReference type="PDB" id="1HY9"/>
    </source>
</evidence>
<keyword id="KW-0002">3D-structure</keyword>
<keyword id="KW-0165">Cleavage on pair of basic residues</keyword>
<keyword id="KW-0903">Direct protein sequencing</keyword>
<keyword id="KW-1015">Disulfide bond</keyword>
<keyword id="KW-0527">Neuropeptide</keyword>
<keyword id="KW-0529">Neurotransmitter</keyword>
<keyword id="KW-0550">Obesity</keyword>
<keyword id="KW-0597">Phosphoprotein</keyword>
<keyword id="KW-1267">Proteomics identification</keyword>
<keyword id="KW-1185">Reference proteome</keyword>
<keyword id="KW-0964">Secreted</keyword>
<keyword id="KW-0732">Signal</keyword>
<accession>Q16568</accession>
<accession>Q6FG92</accession>
<reference key="1">
    <citation type="journal article" date="1996" name="Gene">
        <title>Characterization of the human cDNA and genomic DNA encoding CART: a cocaine- and amphetamine-regulated transcript.</title>
        <authorList>
            <person name="Douglass J.O."/>
            <person name="Daoud S."/>
        </authorList>
    </citation>
    <scope>NUCLEOTIDE SEQUENCE [GENOMIC DNA / MRNA]</scope>
</reference>
<reference key="2">
    <citation type="submission" date="2004-06" db="EMBL/GenBank/DDBJ databases">
        <title>Cloning of human full open reading frames in Gateway(TM) system entry vector (pDONR201).</title>
        <authorList>
            <person name="Ebert L."/>
            <person name="Schick M."/>
            <person name="Neubert P."/>
            <person name="Schatten R."/>
            <person name="Henze S."/>
            <person name="Korn B."/>
        </authorList>
    </citation>
    <scope>NUCLEOTIDE SEQUENCE [LARGE SCALE MRNA]</scope>
</reference>
<reference key="3">
    <citation type="submission" date="2005-07" db="EMBL/GenBank/DDBJ databases">
        <authorList>
            <person name="Mural R.J."/>
            <person name="Istrail S."/>
            <person name="Sutton G.G."/>
            <person name="Florea L."/>
            <person name="Halpern A.L."/>
            <person name="Mobarry C.M."/>
            <person name="Lippert R."/>
            <person name="Walenz B."/>
            <person name="Shatkay H."/>
            <person name="Dew I."/>
            <person name="Miller J.R."/>
            <person name="Flanigan M.J."/>
            <person name="Edwards N.J."/>
            <person name="Bolanos R."/>
            <person name="Fasulo D."/>
            <person name="Halldorsson B.V."/>
            <person name="Hannenhalli S."/>
            <person name="Turner R."/>
            <person name="Yooseph S."/>
            <person name="Lu F."/>
            <person name="Nusskern D.R."/>
            <person name="Shue B.C."/>
            <person name="Zheng X.H."/>
            <person name="Zhong F."/>
            <person name="Delcher A.L."/>
            <person name="Huson D.H."/>
            <person name="Kravitz S.A."/>
            <person name="Mouchard L."/>
            <person name="Reinert K."/>
            <person name="Remington K.A."/>
            <person name="Clark A.G."/>
            <person name="Waterman M.S."/>
            <person name="Eichler E.E."/>
            <person name="Adams M.D."/>
            <person name="Hunkapiller M.W."/>
            <person name="Myers E.W."/>
            <person name="Venter J.C."/>
        </authorList>
    </citation>
    <scope>NUCLEOTIDE SEQUENCE [LARGE SCALE GENOMIC DNA]</scope>
</reference>
<reference key="4">
    <citation type="journal article" date="2004" name="Genome Res.">
        <title>The status, quality, and expansion of the NIH full-length cDNA project: the Mammalian Gene Collection (MGC).</title>
        <authorList>
            <consortium name="The MGC Project Team"/>
        </authorList>
    </citation>
    <scope>NUCLEOTIDE SEQUENCE [LARGE SCALE MRNA]</scope>
    <source>
        <tissue>Brain</tissue>
    </source>
</reference>
<reference key="5">
    <citation type="journal article" date="2004" name="Protein Sci.">
        <title>Signal peptide prediction based on analysis of experimentally verified cleavage sites.</title>
        <authorList>
            <person name="Zhang Z."/>
            <person name="Henzel W.J."/>
        </authorList>
    </citation>
    <scope>PROTEIN SEQUENCE OF 28-42</scope>
</reference>
<reference key="6">
    <citation type="journal article" date="1998" name="Nature">
        <title>Hypothalamic CART is a new anorectic peptide regulated by leptin.</title>
        <authorList>
            <person name="Kristensen P."/>
            <person name="Judge M.E."/>
            <person name="Thim L."/>
            <person name="Ribel U."/>
            <person name="Christjansen K.N."/>
            <person name="Wulff B.S."/>
            <person name="Clausen J.T."/>
            <person name="Jensen P.B."/>
            <person name="Madsen O.D."/>
            <person name="Vrang N."/>
            <person name="Larsen P.J."/>
            <person name="Hastrup S."/>
        </authorList>
    </citation>
    <scope>FUNCTION</scope>
</reference>
<reference key="7">
    <citation type="journal article" date="2001" name="Biochemistry">
        <title>Solution structure of the satiety factor, CART, reveals new functionality of a well-known fold.</title>
        <authorList>
            <person name="Ludvigsen S."/>
            <person name="Thim L."/>
            <person name="Blom A.M."/>
            <person name="Wulff B.S."/>
        </authorList>
    </citation>
    <scope>STRUCTURE BY NMR OF 75-116</scope>
</reference>
<reference key="8">
    <citation type="journal article" date="2000" name="Diabetes">
        <title>The CART gene and human obesity: mutational analysis and population genetics.</title>
        <authorList>
            <person name="Challis B.G."/>
            <person name="Yeo G.S.H."/>
            <person name="Farooqi I.S."/>
            <person name="Luan J."/>
            <person name="Aminian S."/>
            <person name="Halsall D.J."/>
            <person name="Keogh J.M."/>
            <person name="Wareham N.J."/>
            <person name="O'Rahilly S."/>
        </authorList>
    </citation>
    <scope>VARIANT THR-66</scope>
</reference>
<reference key="9">
    <citation type="journal article" date="2001" name="Diabetes">
        <title>Mutational screening of the CART gene in obese children: identifying a mutation (Leu34Phe) associated with reduced resting energy expenditure and cosegregating with obesity phenotype in a large family.</title>
        <authorList>
            <person name="del Giudice E.M."/>
            <person name="Santoro N."/>
            <person name="Cirillo G."/>
            <person name="D'Urso L."/>
            <person name="Di Toro R."/>
            <person name="Perrone L."/>
        </authorList>
    </citation>
    <scope>VARIANT PHE-61</scope>
</reference>
<protein>
    <recommendedName>
        <fullName>Cocaine- and amphetamine-regulated transcript protein</fullName>
    </recommendedName>
    <component>
        <recommendedName>
            <fullName>CART(1-39)</fullName>
        </recommendedName>
    </component>
    <component>
        <recommendedName>
            <fullName>CART(42-89)</fullName>
        </recommendedName>
    </component>
</protein>
<name>CART_HUMAN</name>
<sequence length="116" mass="12829">MESSRVRLLPLLGAALLLMLPLLGTRAQEDAELQPRALDIYSAVDDASHEKELIEALQEVLKKLKSKRVPIYEKKYGQVPMCDAGEQCAVRKGARIGKLCDCPRGTSCNSFLLKCL</sequence>
<dbReference type="EMBL" id="U16826">
    <property type="protein sequence ID" value="AAB08010.1"/>
    <property type="molecule type" value="mRNA"/>
</dbReference>
<dbReference type="EMBL" id="U20325">
    <property type="protein sequence ID" value="AAB08011.1"/>
    <property type="molecule type" value="Genomic_DNA"/>
</dbReference>
<dbReference type="EMBL" id="CR542216">
    <property type="protein sequence ID" value="CAG47012.1"/>
    <property type="molecule type" value="mRNA"/>
</dbReference>
<dbReference type="EMBL" id="CH471084">
    <property type="protein sequence ID" value="EAW95694.1"/>
    <property type="molecule type" value="Genomic_DNA"/>
</dbReference>
<dbReference type="EMBL" id="BC029882">
    <property type="protein sequence ID" value="AAH29882.1"/>
    <property type="molecule type" value="mRNA"/>
</dbReference>
<dbReference type="CCDS" id="CCDS4011.1"/>
<dbReference type="PIR" id="JC4669">
    <property type="entry name" value="JC4669"/>
</dbReference>
<dbReference type="RefSeq" id="NP_004282.1">
    <property type="nucleotide sequence ID" value="NM_004291.4"/>
</dbReference>
<dbReference type="PDB" id="1HY9">
    <property type="method" value="NMR"/>
    <property type="chains" value="A=76-116"/>
</dbReference>
<dbReference type="PDBsum" id="1HY9"/>
<dbReference type="SMR" id="Q16568"/>
<dbReference type="BioGRID" id="114970">
    <property type="interactions" value="47"/>
</dbReference>
<dbReference type="FunCoup" id="Q16568">
    <property type="interactions" value="48"/>
</dbReference>
<dbReference type="IntAct" id="Q16568">
    <property type="interactions" value="44"/>
</dbReference>
<dbReference type="STRING" id="9606.ENSP00000296777"/>
<dbReference type="DrugBank" id="DB00182">
    <property type="generic name" value="Amphetamine"/>
</dbReference>
<dbReference type="DrugCentral" id="Q16568"/>
<dbReference type="GlyGen" id="Q16568">
    <property type="glycosylation" value="1 site, 1 O-linked glycan (1 site)"/>
</dbReference>
<dbReference type="iPTMnet" id="Q16568"/>
<dbReference type="PhosphoSitePlus" id="Q16568"/>
<dbReference type="BioMuta" id="CARTPT"/>
<dbReference type="DMDM" id="2833274"/>
<dbReference type="jPOST" id="Q16568"/>
<dbReference type="MassIVE" id="Q16568"/>
<dbReference type="PaxDb" id="9606-ENSP00000296777"/>
<dbReference type="PeptideAtlas" id="Q16568"/>
<dbReference type="ProteomicsDB" id="60922"/>
<dbReference type="Antibodypedia" id="24184">
    <property type="antibodies" value="227 antibodies from 30 providers"/>
</dbReference>
<dbReference type="DNASU" id="9607"/>
<dbReference type="Ensembl" id="ENST00000296777.5">
    <property type="protein sequence ID" value="ENSP00000296777.4"/>
    <property type="gene ID" value="ENSG00000164326.5"/>
</dbReference>
<dbReference type="GeneID" id="9607"/>
<dbReference type="KEGG" id="hsa:9607"/>
<dbReference type="MANE-Select" id="ENST00000296777.5">
    <property type="protein sequence ID" value="ENSP00000296777.4"/>
    <property type="RefSeq nucleotide sequence ID" value="NM_004291.4"/>
    <property type="RefSeq protein sequence ID" value="NP_004282.1"/>
</dbReference>
<dbReference type="UCSC" id="uc003kbv.2">
    <property type="organism name" value="human"/>
</dbReference>
<dbReference type="AGR" id="HGNC:24323"/>
<dbReference type="CTD" id="9607"/>
<dbReference type="DisGeNET" id="9607"/>
<dbReference type="GeneCards" id="CARTPT"/>
<dbReference type="HGNC" id="HGNC:24323">
    <property type="gene designation" value="CARTPT"/>
</dbReference>
<dbReference type="HPA" id="ENSG00000164326">
    <property type="expression patterns" value="Tissue enriched (brain)"/>
</dbReference>
<dbReference type="MalaCards" id="CARTPT"/>
<dbReference type="MIM" id="602606">
    <property type="type" value="gene"/>
</dbReference>
<dbReference type="neXtProt" id="NX_Q16568"/>
<dbReference type="OpenTargets" id="ENSG00000164326"/>
<dbReference type="PharmGKB" id="PA162381084"/>
<dbReference type="VEuPathDB" id="HostDB:ENSG00000164326"/>
<dbReference type="eggNOG" id="ENOG502S2YU">
    <property type="taxonomic scope" value="Eukaryota"/>
</dbReference>
<dbReference type="GeneTree" id="ENSGT00390000018319"/>
<dbReference type="HOGENOM" id="CLU_157363_1_0_1"/>
<dbReference type="InParanoid" id="Q16568"/>
<dbReference type="OMA" id="RIYEKKY"/>
<dbReference type="OrthoDB" id="9936511at2759"/>
<dbReference type="PAN-GO" id="Q16568">
    <property type="GO annotations" value="3 GO annotations based on evolutionary models"/>
</dbReference>
<dbReference type="PhylomeDB" id="Q16568"/>
<dbReference type="TreeFam" id="TF332948"/>
<dbReference type="PathwayCommons" id="Q16568"/>
<dbReference type="SignaLink" id="Q16568"/>
<dbReference type="SIGNOR" id="Q16568"/>
<dbReference type="BioGRID-ORCS" id="9607">
    <property type="hits" value="13 hits in 1157 CRISPR screens"/>
</dbReference>
<dbReference type="EvolutionaryTrace" id="Q16568"/>
<dbReference type="GenomeRNAi" id="9607"/>
<dbReference type="Pharos" id="Q16568">
    <property type="development level" value="Tbio"/>
</dbReference>
<dbReference type="PRO" id="PR:Q16568"/>
<dbReference type="Proteomes" id="UP000005640">
    <property type="component" value="Chromosome 5"/>
</dbReference>
<dbReference type="RNAct" id="Q16568">
    <property type="molecule type" value="protein"/>
</dbReference>
<dbReference type="Bgee" id="ENSG00000164326">
    <property type="expression patterns" value="Expressed in male germ line stem cell (sensu Vertebrata) in testis and 124 other cell types or tissues"/>
</dbReference>
<dbReference type="GO" id="GO:0005615">
    <property type="term" value="C:extracellular space"/>
    <property type="evidence" value="ECO:0000314"/>
    <property type="project" value="HGNC-UCL"/>
</dbReference>
<dbReference type="GO" id="GO:0030141">
    <property type="term" value="C:secretory granule"/>
    <property type="evidence" value="ECO:0000314"/>
    <property type="project" value="UniProtKB"/>
</dbReference>
<dbReference type="GO" id="GO:0045202">
    <property type="term" value="C:synapse"/>
    <property type="evidence" value="ECO:0007669"/>
    <property type="project" value="GOC"/>
</dbReference>
<dbReference type="GO" id="GO:0005184">
    <property type="term" value="F:neuropeptide hormone activity"/>
    <property type="evidence" value="ECO:0007669"/>
    <property type="project" value="InterPro"/>
</dbReference>
<dbReference type="GO" id="GO:0008343">
    <property type="term" value="P:adult feeding behavior"/>
    <property type="evidence" value="ECO:0000250"/>
    <property type="project" value="HGNC-UCL"/>
</dbReference>
<dbReference type="GO" id="GO:0007267">
    <property type="term" value="P:cell-cell signaling"/>
    <property type="evidence" value="ECO:0000304"/>
    <property type="project" value="ProtInc"/>
</dbReference>
<dbReference type="GO" id="GO:0009267">
    <property type="term" value="P:cellular response to starvation"/>
    <property type="evidence" value="ECO:0000250"/>
    <property type="project" value="HGNC-UCL"/>
</dbReference>
<dbReference type="GO" id="GO:0007268">
    <property type="term" value="P:chemical synaptic transmission"/>
    <property type="evidence" value="ECO:0007669"/>
    <property type="project" value="UniProtKB-KW"/>
</dbReference>
<dbReference type="GO" id="GO:0032922">
    <property type="term" value="P:circadian regulation of gene expression"/>
    <property type="evidence" value="ECO:0000250"/>
    <property type="project" value="HGNC-UCL"/>
</dbReference>
<dbReference type="GO" id="GO:0007186">
    <property type="term" value="P:G protein-coupled receptor signaling pathway"/>
    <property type="evidence" value="ECO:0000250"/>
    <property type="project" value="HGNC-UCL"/>
</dbReference>
<dbReference type="GO" id="GO:0001678">
    <property type="term" value="P:intracellular glucose homeostasis"/>
    <property type="evidence" value="ECO:0000314"/>
    <property type="project" value="HGNC-UCL"/>
</dbReference>
<dbReference type="GO" id="GO:0032099">
    <property type="term" value="P:negative regulation of appetite"/>
    <property type="evidence" value="ECO:0000250"/>
    <property type="project" value="HGNC-UCL"/>
</dbReference>
<dbReference type="GO" id="GO:0045779">
    <property type="term" value="P:negative regulation of bone resorption"/>
    <property type="evidence" value="ECO:0000315"/>
    <property type="project" value="HGNC-UCL"/>
</dbReference>
<dbReference type="GO" id="GO:0070093">
    <property type="term" value="P:negative regulation of glucagon secretion"/>
    <property type="evidence" value="ECO:0007669"/>
    <property type="project" value="Ensembl"/>
</dbReference>
<dbReference type="GO" id="GO:0045671">
    <property type="term" value="P:negative regulation of osteoclast differentiation"/>
    <property type="evidence" value="ECO:0000304"/>
    <property type="project" value="HGNC-UCL"/>
</dbReference>
<dbReference type="GO" id="GO:0007218">
    <property type="term" value="P:neuropeptide signaling pathway"/>
    <property type="evidence" value="ECO:0007669"/>
    <property type="project" value="UniProtKB-KW"/>
</dbReference>
<dbReference type="GO" id="GO:0045777">
    <property type="term" value="P:positive regulation of blood pressure"/>
    <property type="evidence" value="ECO:0000314"/>
    <property type="project" value="HGNC-UCL"/>
</dbReference>
<dbReference type="GO" id="GO:0032812">
    <property type="term" value="P:positive regulation of epinephrine secretion"/>
    <property type="evidence" value="ECO:0000314"/>
    <property type="project" value="HGNC-UCL"/>
</dbReference>
<dbReference type="GO" id="GO:0043410">
    <property type="term" value="P:positive regulation of MAPK cascade"/>
    <property type="evidence" value="ECO:0000250"/>
    <property type="project" value="HGNC-UCL"/>
</dbReference>
<dbReference type="GO" id="GO:0051971">
    <property type="term" value="P:positive regulation of transmission of nerve impulse"/>
    <property type="evidence" value="ECO:0000314"/>
    <property type="project" value="HGNC-UCL"/>
</dbReference>
<dbReference type="GO" id="GO:0050796">
    <property type="term" value="P:regulation of insulin secretion"/>
    <property type="evidence" value="ECO:0007669"/>
    <property type="project" value="Ensembl"/>
</dbReference>
<dbReference type="GO" id="GO:0043278">
    <property type="term" value="P:response to morphine"/>
    <property type="evidence" value="ECO:0007669"/>
    <property type="project" value="Ensembl"/>
</dbReference>
<dbReference type="GO" id="GO:0007165">
    <property type="term" value="P:signal transduction"/>
    <property type="evidence" value="ECO:0000304"/>
    <property type="project" value="ProtInc"/>
</dbReference>
<dbReference type="GO" id="GO:0070253">
    <property type="term" value="P:somatostatin secretion"/>
    <property type="evidence" value="ECO:0007669"/>
    <property type="project" value="Ensembl"/>
</dbReference>
<dbReference type="CDD" id="cd22741">
    <property type="entry name" value="CART_CTD-like"/>
    <property type="match status" value="1"/>
</dbReference>
<dbReference type="FunFam" id="4.10.40.30:FF:000001">
    <property type="entry name" value="Cocaine-and amphetamine-regulated transcript protein"/>
    <property type="match status" value="1"/>
</dbReference>
<dbReference type="Gene3D" id="4.10.40.30">
    <property type="entry name" value="CART, C-terminal domain"/>
    <property type="match status" value="1"/>
</dbReference>
<dbReference type="InterPro" id="IPR009106">
    <property type="entry name" value="CART"/>
</dbReference>
<dbReference type="InterPro" id="IPR036722">
    <property type="entry name" value="CART_C_sf"/>
</dbReference>
<dbReference type="PANTHER" id="PTHR16655">
    <property type="entry name" value="COCAINE AND AMPHETAMINE REGULATED TRANSCRIPT PROTEIN"/>
    <property type="match status" value="1"/>
</dbReference>
<dbReference type="PANTHER" id="PTHR16655:SF0">
    <property type="entry name" value="COCAINE- AND AMPHETAMINE-REGULATED TRANSCRIPT PROTEIN"/>
    <property type="match status" value="1"/>
</dbReference>
<dbReference type="Pfam" id="PF06373">
    <property type="entry name" value="CART"/>
    <property type="match status" value="1"/>
</dbReference>
<dbReference type="SUPFAM" id="SSF64546">
    <property type="entry name" value="Satiety factor CART (cocaine and amphetamine regulated transcript)"/>
    <property type="match status" value="1"/>
</dbReference>
<feature type="signal peptide" evidence="5">
    <location>
        <begin position="1"/>
        <end position="27"/>
    </location>
</feature>
<feature type="chain" id="PRO_0000004433" description="Cocaine- and amphetamine-regulated transcript protein">
    <location>
        <begin position="28"/>
        <end position="116"/>
    </location>
</feature>
<feature type="peptide" id="PRO_0000004434" description="CART(1-39)">
    <location>
        <begin position="28"/>
        <end position="66"/>
    </location>
</feature>
<feature type="peptide" id="PRO_0000004435" description="CART(42-89)">
    <location>
        <begin position="69"/>
        <end position="116"/>
    </location>
</feature>
<feature type="modified residue" description="Phosphotyrosine" evidence="1">
    <location>
        <position position="41"/>
    </location>
</feature>
<feature type="modified residue" description="Phosphoserine" evidence="2">
    <location>
        <position position="48"/>
    </location>
</feature>
<feature type="disulfide bond" evidence="8">
    <location>
        <begin position="82"/>
        <end position="100"/>
    </location>
</feature>
<feature type="disulfide bond" evidence="8">
    <location>
        <begin position="88"/>
        <end position="108"/>
    </location>
</feature>
<feature type="disulfide bond" evidence="8">
    <location>
        <begin position="102"/>
        <end position="115"/>
    </location>
</feature>
<feature type="sequence variant" id="VAR_012199" description="Cosegregates with obesity phenotype in a large family; dbSNP:rs121909065." evidence="4">
    <original>L</original>
    <variation>F</variation>
    <location>
        <position position="61"/>
    </location>
</feature>
<feature type="sequence variant" id="VAR_012200" description="In dbSNP:rs78242624." evidence="3">
    <original>S</original>
    <variation>T</variation>
    <location>
        <position position="66"/>
    </location>
</feature>
<feature type="sequence variant" id="VAR_053022" description="In dbSNP:rs12517689.">
    <original>L</original>
    <variation>M</variation>
    <location>
        <position position="113"/>
    </location>
</feature>
<feature type="strand" evidence="9">
    <location>
        <begin position="84"/>
        <end position="86"/>
    </location>
</feature>
<feature type="strand" evidence="9">
    <location>
        <begin position="88"/>
        <end position="91"/>
    </location>
</feature>
<feature type="strand" evidence="9">
    <location>
        <begin position="93"/>
        <end position="98"/>
    </location>
</feature>
<feature type="turn" evidence="9">
    <location>
        <begin position="110"/>
        <end position="112"/>
    </location>
</feature>
<gene>
    <name type="primary">CARTPT</name>
    <name type="synonym">CART</name>
</gene>
<proteinExistence type="evidence at protein level"/>